<dbReference type="GO" id="GO:0005576">
    <property type="term" value="C:extracellular region"/>
    <property type="evidence" value="ECO:0007669"/>
    <property type="project" value="UniProtKB-KW"/>
</dbReference>
<feature type="chain" id="PRO_0000079680" description="23 kDa cell wall protein">
    <location>
        <begin position="1"/>
        <end position="20" status="greater than"/>
    </location>
</feature>
<feature type="non-terminal residue" evidence="2">
    <location>
        <position position="20"/>
    </location>
</feature>
<accession>P80838</accession>
<sequence length="20" mass="2343">IPCRKAIDVPFGXRYVVXTW</sequence>
<comment type="subcellular location">
    <subcellularLocation>
        <location evidence="1">Secreted</location>
        <location evidence="1">Cell wall</location>
    </subcellularLocation>
</comment>
<proteinExistence type="evidence at protein level"/>
<evidence type="ECO:0000269" key="1">
    <source>
    </source>
</evidence>
<evidence type="ECO:0000303" key="2">
    <source>
    </source>
</evidence>
<evidence type="ECO:0000305" key="3"/>
<name>CWP17_ARATH</name>
<organism>
    <name type="scientific">Arabidopsis thaliana</name>
    <name type="common">Mouse-ear cress</name>
    <dbReference type="NCBI Taxonomy" id="3702"/>
    <lineage>
        <taxon>Eukaryota</taxon>
        <taxon>Viridiplantae</taxon>
        <taxon>Streptophyta</taxon>
        <taxon>Embryophyta</taxon>
        <taxon>Tracheophyta</taxon>
        <taxon>Spermatophyta</taxon>
        <taxon>Magnoliopsida</taxon>
        <taxon>eudicotyledons</taxon>
        <taxon>Gunneridae</taxon>
        <taxon>Pentapetalae</taxon>
        <taxon>rosids</taxon>
        <taxon>malvids</taxon>
        <taxon>Brassicales</taxon>
        <taxon>Brassicaceae</taxon>
        <taxon>Camelineae</taxon>
        <taxon>Arabidopsis</taxon>
    </lineage>
</organism>
<keyword id="KW-0134">Cell wall</keyword>
<keyword id="KW-0903">Direct protein sequencing</keyword>
<keyword id="KW-0964">Secreted</keyword>
<protein>
    <recommendedName>
        <fullName>23 kDa cell wall protein</fullName>
    </recommendedName>
</protein>
<reference evidence="3" key="1">
    <citation type="journal article" date="1997" name="J. Biol. Chem.">
        <title>Differential extraction and protein sequencing reveals major differences in patterns of primary cell wall proteins from plants.</title>
        <authorList>
            <person name="Robertson D."/>
            <person name="Mitchell G.P."/>
            <person name="Gilroy J.S."/>
            <person name="Gerrish C."/>
            <person name="Bolwell G.P."/>
            <person name="Slabas A.R."/>
        </authorList>
    </citation>
    <scope>PROTEIN SEQUENCE</scope>
    <scope>SUBCELLULAR LOCATION</scope>
    <source>
        <strain>cv. Landsberg erecta</strain>
    </source>
</reference>